<geneLocation type="chloroplast"/>
<feature type="chain" id="PRO_0000062496" description="Ribulose bisphosphate carboxylase large chain">
    <location>
        <begin position="1" status="less than"/>
        <end position="465"/>
    </location>
</feature>
<feature type="active site" description="Proton acceptor" evidence="1">
    <location>
        <position position="165"/>
    </location>
</feature>
<feature type="active site" description="Proton acceptor" evidence="1">
    <location>
        <position position="284"/>
    </location>
</feature>
<feature type="binding site" description="in homodimeric partner" evidence="1">
    <location>
        <position position="113"/>
    </location>
    <ligand>
        <name>substrate</name>
    </ligand>
</feature>
<feature type="binding site" evidence="1">
    <location>
        <position position="163"/>
    </location>
    <ligand>
        <name>substrate</name>
    </ligand>
</feature>
<feature type="binding site" evidence="1">
    <location>
        <position position="167"/>
    </location>
    <ligand>
        <name>substrate</name>
    </ligand>
</feature>
<feature type="binding site" description="via carbamate group" evidence="1">
    <location>
        <position position="191"/>
    </location>
    <ligand>
        <name>Mg(2+)</name>
        <dbReference type="ChEBI" id="CHEBI:18420"/>
    </ligand>
</feature>
<feature type="binding site" evidence="1">
    <location>
        <position position="193"/>
    </location>
    <ligand>
        <name>Mg(2+)</name>
        <dbReference type="ChEBI" id="CHEBI:18420"/>
    </ligand>
</feature>
<feature type="binding site" evidence="1">
    <location>
        <position position="194"/>
    </location>
    <ligand>
        <name>Mg(2+)</name>
        <dbReference type="ChEBI" id="CHEBI:18420"/>
    </ligand>
</feature>
<feature type="binding site" evidence="1">
    <location>
        <position position="285"/>
    </location>
    <ligand>
        <name>substrate</name>
    </ligand>
</feature>
<feature type="binding site" evidence="1">
    <location>
        <position position="317"/>
    </location>
    <ligand>
        <name>substrate</name>
    </ligand>
</feature>
<feature type="binding site" evidence="1">
    <location>
        <position position="369"/>
    </location>
    <ligand>
        <name>substrate</name>
    </ligand>
</feature>
<feature type="site" description="Transition state stabilizer" evidence="1">
    <location>
        <position position="324"/>
    </location>
</feature>
<feature type="modified residue" description="N6,N6,N6-trimethyllysine" evidence="1">
    <location>
        <position position="4"/>
    </location>
</feature>
<feature type="modified residue" description="N6-carboxylysine" evidence="1">
    <location>
        <position position="191"/>
    </location>
</feature>
<feature type="disulfide bond" description="Interchain; in linked form" evidence="1">
    <location>
        <position position="237"/>
    </location>
</feature>
<feature type="non-terminal residue">
    <location>
        <position position="1"/>
    </location>
</feature>
<organism>
    <name type="scientific">Ilex crenata</name>
    <name type="common">Japanese holly</name>
    <dbReference type="NCBI Taxonomy" id="4296"/>
    <lineage>
        <taxon>Eukaryota</taxon>
        <taxon>Viridiplantae</taxon>
        <taxon>Streptophyta</taxon>
        <taxon>Embryophyta</taxon>
        <taxon>Tracheophyta</taxon>
        <taxon>Spermatophyta</taxon>
        <taxon>Magnoliopsida</taxon>
        <taxon>eudicotyledons</taxon>
        <taxon>Gunneridae</taxon>
        <taxon>Pentapetalae</taxon>
        <taxon>asterids</taxon>
        <taxon>campanulids</taxon>
        <taxon>Aquifoliales</taxon>
        <taxon>Aquifoliaceae</taxon>
        <taxon>Ilex</taxon>
    </lineage>
</organism>
<name>RBL_ILECR</name>
<accession>P28426</accession>
<reference key="1">
    <citation type="journal article" date="1992" name="Science">
        <title>Carnivorous plants: phylogeny and structural evolution.</title>
        <authorList>
            <person name="Albert V.A."/>
            <person name="Williams S.E."/>
            <person name="Chase M.W."/>
        </authorList>
    </citation>
    <scope>NUCLEOTIDE SEQUENCE [GENOMIC DNA]</scope>
</reference>
<keyword id="KW-0113">Calvin cycle</keyword>
<keyword id="KW-0120">Carbon dioxide fixation</keyword>
<keyword id="KW-0150">Chloroplast</keyword>
<keyword id="KW-1015">Disulfide bond</keyword>
<keyword id="KW-0456">Lyase</keyword>
<keyword id="KW-0460">Magnesium</keyword>
<keyword id="KW-0479">Metal-binding</keyword>
<keyword id="KW-0488">Methylation</keyword>
<keyword id="KW-0503">Monooxygenase</keyword>
<keyword id="KW-0560">Oxidoreductase</keyword>
<keyword id="KW-0601">Photorespiration</keyword>
<keyword id="KW-0602">Photosynthesis</keyword>
<keyword id="KW-0934">Plastid</keyword>
<sequence>VGFKAGVKEYKLNYYTPDYDTKDTDILAAFRVSPQPGVPPEEAGAAVAAESSTGTWTTVWTDGLTSLDRYKGRCYEIEPVAGEENQFIAYVAYPLDLFEEGSVTNMLTSIVGNVFGFKALRALRLEDLRIPPAYTKTFQGPPHGIQVERDKLNKYGRPLLGCTIKPKLGLSAKNYGRAVYECLRGGLDFTKDDENVNSQPFMRWRDRFLFCAEALFKAQAETGEIKGHYLNATAGTCEEMIKRAVFARELGVPIVMHDYLTGGFTANTSLAHYCRDNGLLLHIHRAMHAVIDRQKNHGMHFRVLAKALRMSGGDHIHAGTVVGKLEGEREITLGFVDLLRDDFVEKDRSRGIYFTQDWVSLPGVLPVASGGIHVWHMPALTEIFGDDSVLQFGGGTLGHPWGNAPGAVANRVALEACVKARNEGRDLAREGNEIIREASKWSPELAAACEVWKEIKFEFQAMDTL</sequence>
<comment type="function">
    <text evidence="1">RuBisCO catalyzes two reactions: the carboxylation of D-ribulose 1,5-bisphosphate, the primary event in carbon dioxide fixation, as well as the oxidative fragmentation of the pentose substrate in the photorespiration process. Both reactions occur simultaneously and in competition at the same active site.</text>
</comment>
<comment type="catalytic activity">
    <reaction evidence="1">
        <text>2 (2R)-3-phosphoglycerate + 2 H(+) = D-ribulose 1,5-bisphosphate + CO2 + H2O</text>
        <dbReference type="Rhea" id="RHEA:23124"/>
        <dbReference type="ChEBI" id="CHEBI:15377"/>
        <dbReference type="ChEBI" id="CHEBI:15378"/>
        <dbReference type="ChEBI" id="CHEBI:16526"/>
        <dbReference type="ChEBI" id="CHEBI:57870"/>
        <dbReference type="ChEBI" id="CHEBI:58272"/>
        <dbReference type="EC" id="4.1.1.39"/>
    </reaction>
</comment>
<comment type="catalytic activity">
    <reaction evidence="1">
        <text>D-ribulose 1,5-bisphosphate + O2 = 2-phosphoglycolate + (2R)-3-phosphoglycerate + 2 H(+)</text>
        <dbReference type="Rhea" id="RHEA:36631"/>
        <dbReference type="ChEBI" id="CHEBI:15378"/>
        <dbReference type="ChEBI" id="CHEBI:15379"/>
        <dbReference type="ChEBI" id="CHEBI:57870"/>
        <dbReference type="ChEBI" id="CHEBI:58033"/>
        <dbReference type="ChEBI" id="CHEBI:58272"/>
    </reaction>
</comment>
<comment type="cofactor">
    <cofactor evidence="1">
        <name>Mg(2+)</name>
        <dbReference type="ChEBI" id="CHEBI:18420"/>
    </cofactor>
    <text evidence="1">Binds 1 Mg(2+) ion per subunit.</text>
</comment>
<comment type="subunit">
    <text evidence="1">Heterohexadecamer of 8 large chains and 8 small chains; disulfide-linked. The disulfide link is formed within the large subunit homodimers.</text>
</comment>
<comment type="subcellular location">
    <subcellularLocation>
        <location>Plastid</location>
        <location>Chloroplast</location>
    </subcellularLocation>
</comment>
<comment type="PTM">
    <text evidence="1">The disulfide bond which can form in the large chain dimeric partners within the hexadecamer appears to be associated with oxidative stress and protein turnover.</text>
</comment>
<comment type="miscellaneous">
    <text evidence="1">The basic functional RuBisCO is composed of a large chain homodimer in a 'head-to-tail' conformation. In form I RuBisCO this homodimer is arranged in a barrel-like tetramer with the small subunits forming a tetrameric 'cap' on each end of the 'barrel'.</text>
</comment>
<comment type="similarity">
    <text evidence="1">Belongs to the RuBisCO large chain family. Type I subfamily.</text>
</comment>
<protein>
    <recommendedName>
        <fullName evidence="1">Ribulose bisphosphate carboxylase large chain</fullName>
        <shortName evidence="1">RuBisCO large subunit</shortName>
        <ecNumber evidence="1">4.1.1.39</ecNumber>
    </recommendedName>
</protein>
<evidence type="ECO:0000255" key="1">
    <source>
        <dbReference type="HAMAP-Rule" id="MF_01338"/>
    </source>
</evidence>
<dbReference type="EC" id="4.1.1.39" evidence="1"/>
<dbReference type="EMBL" id="L01928">
    <property type="protein sequence ID" value="AAA84328.2"/>
    <property type="molecule type" value="Genomic_DNA"/>
</dbReference>
<dbReference type="SMR" id="P28426"/>
<dbReference type="GO" id="GO:0009507">
    <property type="term" value="C:chloroplast"/>
    <property type="evidence" value="ECO:0007669"/>
    <property type="project" value="UniProtKB-SubCell"/>
</dbReference>
<dbReference type="GO" id="GO:0000287">
    <property type="term" value="F:magnesium ion binding"/>
    <property type="evidence" value="ECO:0007669"/>
    <property type="project" value="InterPro"/>
</dbReference>
<dbReference type="GO" id="GO:0004497">
    <property type="term" value="F:monooxygenase activity"/>
    <property type="evidence" value="ECO:0007669"/>
    <property type="project" value="UniProtKB-KW"/>
</dbReference>
<dbReference type="GO" id="GO:0016984">
    <property type="term" value="F:ribulose-bisphosphate carboxylase activity"/>
    <property type="evidence" value="ECO:0007669"/>
    <property type="project" value="UniProtKB-EC"/>
</dbReference>
<dbReference type="GO" id="GO:0009853">
    <property type="term" value="P:photorespiration"/>
    <property type="evidence" value="ECO:0007669"/>
    <property type="project" value="UniProtKB-KW"/>
</dbReference>
<dbReference type="GO" id="GO:0019253">
    <property type="term" value="P:reductive pentose-phosphate cycle"/>
    <property type="evidence" value="ECO:0007669"/>
    <property type="project" value="UniProtKB-KW"/>
</dbReference>
<dbReference type="CDD" id="cd08212">
    <property type="entry name" value="RuBisCO_large_I"/>
    <property type="match status" value="1"/>
</dbReference>
<dbReference type="FunFam" id="3.20.20.110:FF:000001">
    <property type="entry name" value="Ribulose bisphosphate carboxylase large chain"/>
    <property type="match status" value="1"/>
</dbReference>
<dbReference type="FunFam" id="3.30.70.150:FF:000001">
    <property type="entry name" value="Ribulose bisphosphate carboxylase large chain"/>
    <property type="match status" value="1"/>
</dbReference>
<dbReference type="Gene3D" id="3.20.20.110">
    <property type="entry name" value="Ribulose bisphosphate carboxylase, large subunit, C-terminal domain"/>
    <property type="match status" value="1"/>
</dbReference>
<dbReference type="Gene3D" id="3.30.70.150">
    <property type="entry name" value="RuBisCO large subunit, N-terminal domain"/>
    <property type="match status" value="1"/>
</dbReference>
<dbReference type="HAMAP" id="MF_01338">
    <property type="entry name" value="RuBisCO_L_type1"/>
    <property type="match status" value="1"/>
</dbReference>
<dbReference type="InterPro" id="IPR033966">
    <property type="entry name" value="RuBisCO"/>
</dbReference>
<dbReference type="InterPro" id="IPR020878">
    <property type="entry name" value="RuBisCo_large_chain_AS"/>
</dbReference>
<dbReference type="InterPro" id="IPR000685">
    <property type="entry name" value="RuBisCO_lsu_C"/>
</dbReference>
<dbReference type="InterPro" id="IPR036376">
    <property type="entry name" value="RuBisCO_lsu_C_sf"/>
</dbReference>
<dbReference type="InterPro" id="IPR017443">
    <property type="entry name" value="RuBisCO_lsu_fd_N"/>
</dbReference>
<dbReference type="InterPro" id="IPR036422">
    <property type="entry name" value="RuBisCO_lsu_N_sf"/>
</dbReference>
<dbReference type="InterPro" id="IPR020888">
    <property type="entry name" value="RuBisCO_lsuI"/>
</dbReference>
<dbReference type="NCBIfam" id="NF003252">
    <property type="entry name" value="PRK04208.1"/>
    <property type="match status" value="1"/>
</dbReference>
<dbReference type="PANTHER" id="PTHR42704">
    <property type="entry name" value="RIBULOSE BISPHOSPHATE CARBOXYLASE"/>
    <property type="match status" value="1"/>
</dbReference>
<dbReference type="PANTHER" id="PTHR42704:SF16">
    <property type="entry name" value="RIBULOSE BISPHOSPHATE CARBOXYLASE LARGE CHAIN"/>
    <property type="match status" value="1"/>
</dbReference>
<dbReference type="Pfam" id="PF00016">
    <property type="entry name" value="RuBisCO_large"/>
    <property type="match status" value="1"/>
</dbReference>
<dbReference type="Pfam" id="PF02788">
    <property type="entry name" value="RuBisCO_large_N"/>
    <property type="match status" value="1"/>
</dbReference>
<dbReference type="SFLD" id="SFLDG01052">
    <property type="entry name" value="RuBisCO"/>
    <property type="match status" value="1"/>
</dbReference>
<dbReference type="SFLD" id="SFLDS00014">
    <property type="entry name" value="RuBisCO"/>
    <property type="match status" value="1"/>
</dbReference>
<dbReference type="SFLD" id="SFLDG00301">
    <property type="entry name" value="RuBisCO-like_proteins"/>
    <property type="match status" value="1"/>
</dbReference>
<dbReference type="SUPFAM" id="SSF51649">
    <property type="entry name" value="RuBisCo, C-terminal domain"/>
    <property type="match status" value="1"/>
</dbReference>
<dbReference type="SUPFAM" id="SSF54966">
    <property type="entry name" value="RuBisCO, large subunit, small (N-terminal) domain"/>
    <property type="match status" value="1"/>
</dbReference>
<dbReference type="PROSITE" id="PS00157">
    <property type="entry name" value="RUBISCO_LARGE"/>
    <property type="match status" value="1"/>
</dbReference>
<gene>
    <name evidence="1" type="primary">rbcL</name>
</gene>
<proteinExistence type="inferred from homology"/>